<comment type="similarity">
    <text evidence="3">Belongs to the FAM167 (SEC) family.</text>
</comment>
<gene>
    <name type="primary">Fam167a</name>
</gene>
<proteinExistence type="evidence at transcript level"/>
<feature type="chain" id="PRO_0000301687" description="Protein FAM167A">
    <location>
        <begin position="1"/>
        <end position="215"/>
    </location>
</feature>
<feature type="region of interest" description="Disordered" evidence="2">
    <location>
        <begin position="1"/>
        <end position="26"/>
    </location>
</feature>
<feature type="region of interest" description="Disordered" evidence="2">
    <location>
        <begin position="63"/>
        <end position="109"/>
    </location>
</feature>
<feature type="coiled-coil region" evidence="1">
    <location>
        <begin position="124"/>
        <end position="157"/>
    </location>
</feature>
<protein>
    <recommendedName>
        <fullName>Protein FAM167A</fullName>
    </recommendedName>
</protein>
<sequence>MSVPQIQVEEVSEKDRPAGAAVPPDDHLLSLKALTEKLRLETRRPSYLEWQARLEEQTWPFPRPAAQQEASLEQGACGGGEPLMPLKEPRDLLPPSASAGRGDRPLTTGKLEGFQSIDEAIAWLRKELAEMRLQDQQLARQLMRLRGDINKLKIEQTCRLHRRMLNDAAFELEERDELSDLFCDSPLASSFSLSMPLKLIGVTKMNINSRRFSLC</sequence>
<keyword id="KW-0175">Coiled coil</keyword>
<keyword id="KW-1185">Reference proteome</keyword>
<name>F167A_MOUSE</name>
<reference key="1">
    <citation type="journal article" date="2004" name="Genome Res.">
        <title>The status, quality, and expansion of the NIH full-length cDNA project: the Mammalian Gene Collection (MGC).</title>
        <authorList>
            <consortium name="The MGC Project Team"/>
        </authorList>
    </citation>
    <scope>NUCLEOTIDE SEQUENCE [LARGE SCALE MRNA]</scope>
    <source>
        <strain>C57BL/6J</strain>
        <tissue>Brain</tissue>
    </source>
</reference>
<organism>
    <name type="scientific">Mus musculus</name>
    <name type="common">Mouse</name>
    <dbReference type="NCBI Taxonomy" id="10090"/>
    <lineage>
        <taxon>Eukaryota</taxon>
        <taxon>Metazoa</taxon>
        <taxon>Chordata</taxon>
        <taxon>Craniata</taxon>
        <taxon>Vertebrata</taxon>
        <taxon>Euteleostomi</taxon>
        <taxon>Mammalia</taxon>
        <taxon>Eutheria</taxon>
        <taxon>Euarchontoglires</taxon>
        <taxon>Glires</taxon>
        <taxon>Rodentia</taxon>
        <taxon>Myomorpha</taxon>
        <taxon>Muroidea</taxon>
        <taxon>Muridae</taxon>
        <taxon>Murinae</taxon>
        <taxon>Mus</taxon>
        <taxon>Mus</taxon>
    </lineage>
</organism>
<evidence type="ECO:0000255" key="1"/>
<evidence type="ECO:0000256" key="2">
    <source>
        <dbReference type="SAM" id="MobiDB-lite"/>
    </source>
</evidence>
<evidence type="ECO:0000305" key="3"/>
<dbReference type="EMBL" id="BC065085">
    <property type="protein sequence ID" value="AAH65085.1"/>
    <property type="molecule type" value="mRNA"/>
</dbReference>
<dbReference type="CCDS" id="CCDS27201.1"/>
<dbReference type="RefSeq" id="NP_808296.2">
    <property type="nucleotide sequence ID" value="NM_177628.4"/>
</dbReference>
<dbReference type="RefSeq" id="XP_006518940.1">
    <property type="nucleotide sequence ID" value="XM_006518877.5"/>
</dbReference>
<dbReference type="RefSeq" id="XP_006518941.1">
    <property type="nucleotide sequence ID" value="XM_006518878.5"/>
</dbReference>
<dbReference type="SMR" id="Q6P1G6"/>
<dbReference type="FunCoup" id="Q6P1G6">
    <property type="interactions" value="429"/>
</dbReference>
<dbReference type="STRING" id="10090.ENSMUSP00000113962"/>
<dbReference type="iPTMnet" id="Q6P1G6"/>
<dbReference type="PhosphoSitePlus" id="Q6P1G6"/>
<dbReference type="PaxDb" id="10090-ENSMUSP00000113962"/>
<dbReference type="ProteomicsDB" id="275505"/>
<dbReference type="Antibodypedia" id="8501">
    <property type="antibodies" value="52 antibodies from 13 providers"/>
</dbReference>
<dbReference type="DNASU" id="219148"/>
<dbReference type="Ensembl" id="ENSMUST00000121288.2">
    <property type="protein sequence ID" value="ENSMUSP00000113962.2"/>
    <property type="gene ID" value="ENSMUSG00000035095.12"/>
</dbReference>
<dbReference type="GeneID" id="219148"/>
<dbReference type="KEGG" id="mmu:219148"/>
<dbReference type="UCSC" id="uc007uhr.2">
    <property type="organism name" value="mouse"/>
</dbReference>
<dbReference type="AGR" id="MGI:3606565"/>
<dbReference type="CTD" id="83648"/>
<dbReference type="MGI" id="MGI:3606565">
    <property type="gene designation" value="Fam167a"/>
</dbReference>
<dbReference type="VEuPathDB" id="HostDB:ENSMUSG00000035095"/>
<dbReference type="eggNOG" id="ENOG502RY4P">
    <property type="taxonomic scope" value="Eukaryota"/>
</dbReference>
<dbReference type="GeneTree" id="ENSGT00940000159097"/>
<dbReference type="HOGENOM" id="CLU_111170_0_0_1"/>
<dbReference type="InParanoid" id="Q6P1G6"/>
<dbReference type="OMA" id="PQIHIEE"/>
<dbReference type="OrthoDB" id="5965452at2759"/>
<dbReference type="PhylomeDB" id="Q6P1G6"/>
<dbReference type="TreeFam" id="TF330468"/>
<dbReference type="BioGRID-ORCS" id="219148">
    <property type="hits" value="1 hit in 77 CRISPR screens"/>
</dbReference>
<dbReference type="ChiTaRS" id="Fam167a">
    <property type="organism name" value="mouse"/>
</dbReference>
<dbReference type="PRO" id="PR:Q6P1G6"/>
<dbReference type="Proteomes" id="UP000000589">
    <property type="component" value="Chromosome 14"/>
</dbReference>
<dbReference type="RNAct" id="Q6P1G6">
    <property type="molecule type" value="protein"/>
</dbReference>
<dbReference type="Bgee" id="ENSMUSG00000035095">
    <property type="expression patterns" value="Expressed in fourth ventricle and 145 other cell types or tissues"/>
</dbReference>
<dbReference type="InterPro" id="IPR024280">
    <property type="entry name" value="FAM167"/>
</dbReference>
<dbReference type="InterPro" id="IPR051771">
    <property type="entry name" value="FAM167_domain"/>
</dbReference>
<dbReference type="PANTHER" id="PTHR32289">
    <property type="entry name" value="PROTEIN FAM167A"/>
    <property type="match status" value="1"/>
</dbReference>
<dbReference type="PANTHER" id="PTHR32289:SF3">
    <property type="entry name" value="PROTEIN FAM167A"/>
    <property type="match status" value="1"/>
</dbReference>
<dbReference type="Pfam" id="PF11652">
    <property type="entry name" value="FAM167"/>
    <property type="match status" value="1"/>
</dbReference>
<accession>Q6P1G6</accession>